<comment type="function">
    <text evidence="5 6">Microtubule-associated force-producing protein that plays a role in organelle transport. Its motor activity is directed toward the microtubule's plus end. The maximal velocity in an inverted motility assay (moving microtubules on fixed motors) was 1.96 um/s.</text>
</comment>
<comment type="subunit">
    <text evidence="6">Dimer.</text>
</comment>
<comment type="subcellular location">
    <subcellularLocation>
        <location evidence="6">Cytoplasm</location>
        <location evidence="6">Cytoskeleton</location>
    </subcellularLocation>
    <text>Local concentrations were found in vesicular structures around the nucleus in live cells.</text>
</comment>
<comment type="domain">
    <text evidence="1">Composed of three structural domains: a large globular N-terminal domain which is responsible for the motor activity of kinesin (it hydrolyzes ATP and binds microtubule), a central alpha-helical coiled coil domain that mediates the heavy chain dimerization; and a small globular C-terminal domain which interacts with other proteins, vesicles and membranous organelles.</text>
</comment>
<comment type="similarity">
    <text evidence="3">Belongs to the TRAFAC class myosin-kinesin ATPase superfamily. Kinesin family. Kinesin subfamily.</text>
</comment>
<proteinExistence type="evidence at protein level"/>
<accession>Q54UC9</accession>
<accession>O15720</accession>
<accession>Q6S005</accession>
<accession>Q8I825</accession>
<gene>
    <name type="primary">kif3</name>
    <name type="synonym">K3</name>
    <name type="synonym">ksnC</name>
    <name type="ORF">DDB_G0280967</name>
</gene>
<keyword id="KW-0067">ATP-binding</keyword>
<keyword id="KW-0175">Coiled coil</keyword>
<keyword id="KW-0963">Cytoplasm</keyword>
<keyword id="KW-0206">Cytoskeleton</keyword>
<keyword id="KW-0903">Direct protein sequencing</keyword>
<keyword id="KW-0493">Microtubule</keyword>
<keyword id="KW-0505">Motor protein</keyword>
<keyword id="KW-0547">Nucleotide-binding</keyword>
<keyword id="KW-1185">Reference proteome</keyword>
<keyword id="KW-0813">Transport</keyword>
<organism>
    <name type="scientific">Dictyostelium discoideum</name>
    <name type="common">Social amoeba</name>
    <dbReference type="NCBI Taxonomy" id="44689"/>
    <lineage>
        <taxon>Eukaryota</taxon>
        <taxon>Amoebozoa</taxon>
        <taxon>Evosea</taxon>
        <taxon>Eumycetozoa</taxon>
        <taxon>Dictyostelia</taxon>
        <taxon>Dictyosteliales</taxon>
        <taxon>Dictyosteliaceae</taxon>
        <taxon>Dictyostelium</taxon>
    </lineage>
</organism>
<dbReference type="EMBL" id="AY484460">
    <property type="protein sequence ID" value="AAR39436.1"/>
    <property type="molecule type" value="Genomic_DNA"/>
</dbReference>
<dbReference type="EMBL" id="AAFI02000040">
    <property type="protein sequence ID" value="EAL66780.1"/>
    <property type="molecule type" value="Genomic_DNA"/>
</dbReference>
<dbReference type="EMBL" id="AY162212">
    <property type="protein sequence ID" value="AAN86033.1"/>
    <property type="molecule type" value="mRNA"/>
</dbReference>
<dbReference type="EMBL" id="AF015714">
    <property type="protein sequence ID" value="AAB66584.1"/>
    <property type="molecule type" value="Genomic_DNA"/>
</dbReference>
<dbReference type="RefSeq" id="XP_640847.1">
    <property type="nucleotide sequence ID" value="XM_635755.1"/>
</dbReference>
<dbReference type="SMR" id="Q54UC9"/>
<dbReference type="FunCoup" id="Q54UC9">
    <property type="interactions" value="226"/>
</dbReference>
<dbReference type="STRING" id="44689.Q54UC9"/>
<dbReference type="GlyGen" id="Q54UC9">
    <property type="glycosylation" value="1 site"/>
</dbReference>
<dbReference type="PaxDb" id="44689-DDB0216174"/>
<dbReference type="EnsemblProtists" id="EAL66780">
    <property type="protein sequence ID" value="EAL66780"/>
    <property type="gene ID" value="DDB_G0280967"/>
</dbReference>
<dbReference type="GeneID" id="8622903"/>
<dbReference type="KEGG" id="ddi:DDB_G0280967"/>
<dbReference type="dictyBase" id="DDB_G0280967">
    <property type="gene designation" value="kif3"/>
</dbReference>
<dbReference type="VEuPathDB" id="AmoebaDB:DDB_G0280967"/>
<dbReference type="eggNOG" id="KOG0240">
    <property type="taxonomic scope" value="Eukaryota"/>
</dbReference>
<dbReference type="HOGENOM" id="CLU_001485_3_0_1"/>
<dbReference type="InParanoid" id="Q54UC9"/>
<dbReference type="OMA" id="ENRCQKV"/>
<dbReference type="PhylomeDB" id="Q54UC9"/>
<dbReference type="PRO" id="PR:Q54UC9"/>
<dbReference type="Proteomes" id="UP000002195">
    <property type="component" value="Chromosome 3"/>
</dbReference>
<dbReference type="GO" id="GO:0005737">
    <property type="term" value="C:cytoplasm"/>
    <property type="evidence" value="ECO:0000314"/>
    <property type="project" value="dictyBase"/>
</dbReference>
<dbReference type="GO" id="GO:0005871">
    <property type="term" value="C:kinesin complex"/>
    <property type="evidence" value="ECO:0000318"/>
    <property type="project" value="GO_Central"/>
</dbReference>
<dbReference type="GO" id="GO:0005874">
    <property type="term" value="C:microtubule"/>
    <property type="evidence" value="ECO:0000318"/>
    <property type="project" value="GO_Central"/>
</dbReference>
<dbReference type="GO" id="GO:0005524">
    <property type="term" value="F:ATP binding"/>
    <property type="evidence" value="ECO:0007669"/>
    <property type="project" value="UniProtKB-KW"/>
</dbReference>
<dbReference type="GO" id="GO:0016887">
    <property type="term" value="F:ATP hydrolysis activity"/>
    <property type="evidence" value="ECO:0000318"/>
    <property type="project" value="GO_Central"/>
</dbReference>
<dbReference type="GO" id="GO:0042802">
    <property type="term" value="F:identical protein binding"/>
    <property type="evidence" value="ECO:0000353"/>
    <property type="project" value="dictyBase"/>
</dbReference>
<dbReference type="GO" id="GO:0008017">
    <property type="term" value="F:microtubule binding"/>
    <property type="evidence" value="ECO:0000318"/>
    <property type="project" value="GO_Central"/>
</dbReference>
<dbReference type="GO" id="GO:0003777">
    <property type="term" value="F:microtubule motor activity"/>
    <property type="evidence" value="ECO:0000314"/>
    <property type="project" value="dictyBase"/>
</dbReference>
<dbReference type="GO" id="GO:0008574">
    <property type="term" value="F:plus-end-directed microtubule motor activity"/>
    <property type="evidence" value="ECO:0000318"/>
    <property type="project" value="GO_Central"/>
</dbReference>
<dbReference type="GO" id="GO:0030705">
    <property type="term" value="P:cytoskeleton-dependent intracellular transport"/>
    <property type="evidence" value="ECO:0000318"/>
    <property type="project" value="GO_Central"/>
</dbReference>
<dbReference type="GO" id="GO:0007018">
    <property type="term" value="P:microtubule-based movement"/>
    <property type="evidence" value="ECO:0000318"/>
    <property type="project" value="GO_Central"/>
</dbReference>
<dbReference type="CDD" id="cd01369">
    <property type="entry name" value="KISc_KHC_KIF5"/>
    <property type="match status" value="1"/>
</dbReference>
<dbReference type="FunFam" id="3.40.850.10:FF:000031">
    <property type="entry name" value="Kinesin-like protein"/>
    <property type="match status" value="1"/>
</dbReference>
<dbReference type="Gene3D" id="3.40.850.10">
    <property type="entry name" value="Kinesin motor domain"/>
    <property type="match status" value="1"/>
</dbReference>
<dbReference type="InterPro" id="IPR027640">
    <property type="entry name" value="Kinesin-like_fam"/>
</dbReference>
<dbReference type="InterPro" id="IPR019821">
    <property type="entry name" value="Kinesin_motor_CS"/>
</dbReference>
<dbReference type="InterPro" id="IPR001752">
    <property type="entry name" value="Kinesin_motor_dom"/>
</dbReference>
<dbReference type="InterPro" id="IPR036961">
    <property type="entry name" value="Kinesin_motor_dom_sf"/>
</dbReference>
<dbReference type="InterPro" id="IPR027417">
    <property type="entry name" value="P-loop_NTPase"/>
</dbReference>
<dbReference type="PANTHER" id="PTHR47969">
    <property type="entry name" value="CHROMOSOME-ASSOCIATED KINESIN KIF4A-RELATED"/>
    <property type="match status" value="1"/>
</dbReference>
<dbReference type="PANTHER" id="PTHR47969:SF15">
    <property type="entry name" value="CHROMOSOME-ASSOCIATED KINESIN KIF4A-RELATED"/>
    <property type="match status" value="1"/>
</dbReference>
<dbReference type="Pfam" id="PF00225">
    <property type="entry name" value="Kinesin"/>
    <property type="match status" value="1"/>
</dbReference>
<dbReference type="PRINTS" id="PR00380">
    <property type="entry name" value="KINESINHEAVY"/>
</dbReference>
<dbReference type="SMART" id="SM00129">
    <property type="entry name" value="KISc"/>
    <property type="match status" value="1"/>
</dbReference>
<dbReference type="SUPFAM" id="SSF52540">
    <property type="entry name" value="P-loop containing nucleoside triphosphate hydrolases"/>
    <property type="match status" value="1"/>
</dbReference>
<dbReference type="PROSITE" id="PS00411">
    <property type="entry name" value="KINESIN_MOTOR_1"/>
    <property type="match status" value="1"/>
</dbReference>
<dbReference type="PROSITE" id="PS50067">
    <property type="entry name" value="KINESIN_MOTOR_2"/>
    <property type="match status" value="1"/>
</dbReference>
<evidence type="ECO:0000250" key="1"/>
<evidence type="ECO:0000255" key="2"/>
<evidence type="ECO:0000255" key="3">
    <source>
        <dbReference type="PROSITE-ProRule" id="PRU00283"/>
    </source>
</evidence>
<evidence type="ECO:0000256" key="4">
    <source>
        <dbReference type="SAM" id="MobiDB-lite"/>
    </source>
</evidence>
<evidence type="ECO:0000269" key="5">
    <source>
    </source>
</evidence>
<evidence type="ECO:0000269" key="6">
    <source>
    </source>
</evidence>
<evidence type="ECO:0000305" key="7"/>
<name>KIF3_DICDI</name>
<protein>
    <recommendedName>
        <fullName>Kinesin-related protein 3</fullName>
    </recommendedName>
    <alternativeName>
        <fullName>Kinesin family member 3</fullName>
    </alternativeName>
    <alternativeName>
        <fullName>Kinesin-1</fullName>
    </alternativeName>
</protein>
<feature type="chain" id="PRO_0000365578" description="Kinesin-related protein 3">
    <location>
        <begin position="1"/>
        <end position="1193"/>
    </location>
</feature>
<feature type="domain" description="Kinesin motor" evidence="3">
    <location>
        <begin position="3"/>
        <end position="329"/>
    </location>
</feature>
<feature type="region of interest" description="Disordered" evidence="4">
    <location>
        <begin position="377"/>
        <end position="429"/>
    </location>
</feature>
<feature type="region of interest" description="Disordered" evidence="4">
    <location>
        <begin position="573"/>
        <end position="600"/>
    </location>
</feature>
<feature type="region of interest" description="Disordered" evidence="4">
    <location>
        <begin position="611"/>
        <end position="630"/>
    </location>
</feature>
<feature type="region of interest" description="Disordered" evidence="4">
    <location>
        <begin position="638"/>
        <end position="665"/>
    </location>
</feature>
<feature type="region of interest" description="Disordered" evidence="4">
    <location>
        <begin position="973"/>
        <end position="1016"/>
    </location>
</feature>
<feature type="region of interest" description="Disordered" evidence="4">
    <location>
        <begin position="1032"/>
        <end position="1114"/>
    </location>
</feature>
<feature type="region of interest" description="Disordered" evidence="4">
    <location>
        <begin position="1127"/>
        <end position="1193"/>
    </location>
</feature>
<feature type="coiled-coil region" evidence="2">
    <location>
        <begin position="450"/>
        <end position="962"/>
    </location>
</feature>
<feature type="compositionally biased region" description="Low complexity" evidence="4">
    <location>
        <begin position="405"/>
        <end position="429"/>
    </location>
</feature>
<feature type="compositionally biased region" description="Polar residues" evidence="4">
    <location>
        <begin position="573"/>
        <end position="585"/>
    </location>
</feature>
<feature type="compositionally biased region" description="Polar residues" evidence="4">
    <location>
        <begin position="614"/>
        <end position="630"/>
    </location>
</feature>
<feature type="compositionally biased region" description="Low complexity" evidence="4">
    <location>
        <begin position="643"/>
        <end position="665"/>
    </location>
</feature>
<feature type="compositionally biased region" description="Low complexity" evidence="4">
    <location>
        <begin position="985"/>
        <end position="1006"/>
    </location>
</feature>
<feature type="compositionally biased region" description="Polar residues" evidence="4">
    <location>
        <begin position="1007"/>
        <end position="1016"/>
    </location>
</feature>
<feature type="compositionally biased region" description="Low complexity" evidence="4">
    <location>
        <begin position="1044"/>
        <end position="1078"/>
    </location>
</feature>
<feature type="compositionally biased region" description="Low complexity" evidence="4">
    <location>
        <begin position="1086"/>
        <end position="1109"/>
    </location>
</feature>
<feature type="compositionally biased region" description="Low complexity" evidence="4">
    <location>
        <begin position="1132"/>
        <end position="1149"/>
    </location>
</feature>
<feature type="compositionally biased region" description="Polar residues" evidence="4">
    <location>
        <begin position="1150"/>
        <end position="1165"/>
    </location>
</feature>
<feature type="compositionally biased region" description="Polar residues" evidence="4">
    <location>
        <begin position="1174"/>
        <end position="1193"/>
    </location>
</feature>
<feature type="binding site" evidence="3">
    <location>
        <begin position="85"/>
        <end position="92"/>
    </location>
    <ligand>
        <name>ATP</name>
        <dbReference type="ChEBI" id="CHEBI:30616"/>
    </ligand>
</feature>
<feature type="sequence conflict" description="In Ref. 4; AAB66584." evidence="7" ref="4">
    <original>ELAQ</original>
    <variation>TRNS</variation>
    <location>
        <begin position="17"/>
        <end position="20"/>
    </location>
</feature>
<feature type="sequence conflict" description="In Ref. 1; AAR39436." evidence="7" ref="1">
    <original>S</original>
    <variation>K</variation>
    <location>
        <position position="123"/>
    </location>
</feature>
<feature type="sequence conflict" description="In Ref. 4; AAB66584." evidence="7" ref="4">
    <original>NI</original>
    <variation>RN</variation>
    <location>
        <begin position="128"/>
        <end position="129"/>
    </location>
</feature>
<feature type="sequence conflict" description="In Ref. 1; AAR39436." evidence="7" ref="1">
    <original>I</original>
    <variation>G</variation>
    <location>
        <position position="132"/>
    </location>
</feature>
<feature type="sequence conflict" description="In Ref. 1; AAR39436 and 3; AAN86033." evidence="7" ref="1 3">
    <original>T</original>
    <variation>P</variation>
    <location>
        <position position="151"/>
    </location>
</feature>
<feature type="sequence conflict" description="In Ref. 1; AAR39436." evidence="7" ref="1">
    <original>K</original>
    <variation>E</variation>
    <location>
        <position position="162"/>
    </location>
</feature>
<feature type="sequence conflict" description="In Ref. 1; AAR39436." evidence="7" ref="1">
    <original>YI</original>
    <variation>FF</variation>
    <location>
        <begin position="175"/>
        <end position="176"/>
    </location>
</feature>
<feature type="sequence conflict" description="In Ref. 3; AAN86033." evidence="7" ref="3">
    <original>A</original>
    <variation>V</variation>
    <location>
        <position position="764"/>
    </location>
</feature>
<reference key="1">
    <citation type="journal article" date="2003" name="BMC Genomics">
        <title>Identification and phylogenetic analysis of Dictyostelium discoideum kinesin proteins.</title>
        <authorList>
            <person name="Kollmar M."/>
            <person name="Gloeckner G."/>
        </authorList>
    </citation>
    <scope>NUCLEOTIDE SEQUENCE [GENOMIC DNA]</scope>
    <scope>IDENTIFICATION</scope>
    <scope>NOMENCLATURE</scope>
    <source>
        <strain>AX4</strain>
    </source>
</reference>
<reference key="2">
    <citation type="journal article" date="2005" name="Nature">
        <title>The genome of the social amoeba Dictyostelium discoideum.</title>
        <authorList>
            <person name="Eichinger L."/>
            <person name="Pachebat J.A."/>
            <person name="Gloeckner G."/>
            <person name="Rajandream M.A."/>
            <person name="Sucgang R."/>
            <person name="Berriman M."/>
            <person name="Song J."/>
            <person name="Olsen R."/>
            <person name="Szafranski K."/>
            <person name="Xu Q."/>
            <person name="Tunggal B."/>
            <person name="Kummerfeld S."/>
            <person name="Madera M."/>
            <person name="Konfortov B.A."/>
            <person name="Rivero F."/>
            <person name="Bankier A.T."/>
            <person name="Lehmann R."/>
            <person name="Hamlin N."/>
            <person name="Davies R."/>
            <person name="Gaudet P."/>
            <person name="Fey P."/>
            <person name="Pilcher K."/>
            <person name="Chen G."/>
            <person name="Saunders D."/>
            <person name="Sodergren E.J."/>
            <person name="Davis P."/>
            <person name="Kerhornou A."/>
            <person name="Nie X."/>
            <person name="Hall N."/>
            <person name="Anjard C."/>
            <person name="Hemphill L."/>
            <person name="Bason N."/>
            <person name="Farbrother P."/>
            <person name="Desany B."/>
            <person name="Just E."/>
            <person name="Morio T."/>
            <person name="Rost R."/>
            <person name="Churcher C.M."/>
            <person name="Cooper J."/>
            <person name="Haydock S."/>
            <person name="van Driessche N."/>
            <person name="Cronin A."/>
            <person name="Goodhead I."/>
            <person name="Muzny D.M."/>
            <person name="Mourier T."/>
            <person name="Pain A."/>
            <person name="Lu M."/>
            <person name="Harper D."/>
            <person name="Lindsay R."/>
            <person name="Hauser H."/>
            <person name="James K.D."/>
            <person name="Quiles M."/>
            <person name="Madan Babu M."/>
            <person name="Saito T."/>
            <person name="Buchrieser C."/>
            <person name="Wardroper A."/>
            <person name="Felder M."/>
            <person name="Thangavelu M."/>
            <person name="Johnson D."/>
            <person name="Knights A."/>
            <person name="Loulseged H."/>
            <person name="Mungall K.L."/>
            <person name="Oliver K."/>
            <person name="Price C."/>
            <person name="Quail M.A."/>
            <person name="Urushihara H."/>
            <person name="Hernandez J."/>
            <person name="Rabbinowitsch E."/>
            <person name="Steffen D."/>
            <person name="Sanders M."/>
            <person name="Ma J."/>
            <person name="Kohara Y."/>
            <person name="Sharp S."/>
            <person name="Simmonds M.N."/>
            <person name="Spiegler S."/>
            <person name="Tivey A."/>
            <person name="Sugano S."/>
            <person name="White B."/>
            <person name="Walker D."/>
            <person name="Woodward J.R."/>
            <person name="Winckler T."/>
            <person name="Tanaka Y."/>
            <person name="Shaulsky G."/>
            <person name="Schleicher M."/>
            <person name="Weinstock G.M."/>
            <person name="Rosenthal A."/>
            <person name="Cox E.C."/>
            <person name="Chisholm R.L."/>
            <person name="Gibbs R.A."/>
            <person name="Loomis W.F."/>
            <person name="Platzer M."/>
            <person name="Kay R.R."/>
            <person name="Williams J.G."/>
            <person name="Dear P.H."/>
            <person name="Noegel A.A."/>
            <person name="Barrell B.G."/>
            <person name="Kuspa A."/>
        </authorList>
    </citation>
    <scope>NUCLEOTIDE SEQUENCE [LARGE SCALE GENOMIC DNA]</scope>
    <source>
        <strain>AX4</strain>
    </source>
</reference>
<reference key="3">
    <citation type="journal article" date="2002" name="J. Muscle Res. Cell Motil.">
        <title>Kinesin motors and microtubule-based organelle transport in Dictyostelium discoideum.</title>
        <authorList>
            <person name="Klopfenstein D.R."/>
            <person name="Holleran E.A."/>
            <person name="Vale R.D."/>
        </authorList>
    </citation>
    <scope>NUCLEOTIDE SEQUENCE [MRNA] OF 1-1190</scope>
    <scope>IDENTIFICATION</scope>
</reference>
<reference key="4">
    <citation type="journal article" date="1998" name="Mol. Biol. Cell">
        <title>A developmentally regulated kinesin-related motor protein from Dictyostelium discoideum.</title>
        <authorList>
            <person name="de Hostos E.L."/>
            <person name="McCaffrey G."/>
            <person name="Sucgang R."/>
            <person name="Pierce D.W."/>
            <person name="Vale R.D."/>
        </authorList>
    </citation>
    <scope>NUCLEOTIDE SEQUENCE [GENOMIC DNA] OF 17-129</scope>
    <source>
        <strain>AX2</strain>
    </source>
</reference>
<reference key="5">
    <citation type="journal article" date="1999" name="J. Cell Biol.">
        <title>Reconstitution of membrane transport powered by a novel dimeric kinesin motor of the Unc104/KIF1A family purified from Dictyostelium.</title>
        <authorList>
            <person name="Pollock N."/>
            <person name="de Hostos E.L."/>
            <person name="Turck C.W."/>
            <person name="Vale R.D."/>
        </authorList>
    </citation>
    <scope>PROTEIN SEQUENCE OF 230-240</scope>
    <scope>FUNCTION</scope>
</reference>
<reference key="6">
    <citation type="journal article" date="2008" name="Eur. J. Cell Biol.">
        <title>Properties of the Kinesin-1 motor DdKif3 from Dictyostelium discoideum.</title>
        <authorList>
            <person name="Rohelk C."/>
            <person name="Rohlfs M."/>
            <person name="Leier S."/>
            <person name="Schliwa M."/>
            <person name="Liu X."/>
            <person name="Parsch J."/>
            <person name="Woehlke G."/>
        </authorList>
    </citation>
    <scope>FUNCTION</scope>
    <scope>SUBUNIT</scope>
    <scope>SUBCELLULAR LOCATION</scope>
</reference>
<sequence>MSSIRVVCRFRPQNKLELAQGGDSIVSIAPENDSVTINGSESNHSFSFDYVFPSNTTQRDVYDHAAKPVIEDIMAGYNGTLFVYGQTGSGKTFSMTGINDPNGDQELRGIVPRMIETVFEFISNADENIEFIVKASYIEIYMERIRDLLDTRKDNLKVREEKGKGVWVEGTSEVYIYREEDILDVINTGISNRAIAETRMNAESSRSHSIFILTIQQKNLKVGSIKTGKLYLVDLAGSEKISKTGAQGTTLDEAKMINKSLSSLGNVINALTDGKSTHIPYRDSKLTRVLQESLGGNSRTTLIINCSPSSYNEAETISTLRFGSRAKNIKNKAKINQERSAAELKILLSKAENEIENLKGYIKELETVSGVTVSNLKSSGSGSGSGSGSSSSSSGSSGGSGSGGSSNLSNSVNSTSNLNTSSNTSSSNVNANANVITTSVSAPTSPKDTELIKVLQEKCIQLEKQLFKKEEEKKEILEQLEQQQEQIQDKDQEIEGLNSMIESSNNINSLYQNSTNENSVLNVQLSELKLALEKSRFEATEQSLTIEGLNEENQSIKSQLEILKDRIAQSGDSSIASLVPSTPKSSAEMDPLATASKHADEWNEKAEQLKLLQRTPSKAVGSSKSNTATSSPIISLNISESDNIGSGATTTTNNNNATITPATSSNNNVEQQQQQVEELLPSVNEQLLESENQKLQKRIQEIELEFETYKIAKENLTMQKDLEIEQLLESQRISSSFVVDPRNLDDELPAEMMLQAEQIRKLIAENSEQKVHFEATKNENSKLKNRIEMIEEETRQRMEEELNVLREQTNQKLSEFGSLKESLIRDLENRCQKVIDLELVLDELQDRIVTLNERLKRVNKPGGGDQEAAFVQSKLDEITAVKHQLVIENNKHKTEVERLKKLLSHRGEHILILEKTMAINQESLFKLALNHNALTIEHDRAKNELEKLNNLLSQVGVDAQNTGGARVARVIRGGGGNNQLKKFNHSSSSSTSSSSALNHSSINNNHTTPTPLSANLYSNTKRSTKELNTGVKAEPLSLSGSPFNTSIPSSPNHTSSNNINNNSNNNNNNNNNNNIGNSGNIGGVGNNNSSISNSNNNSSSNLNANLNGNTPVKITSENSSSSLWNIFKKKSPSSTPPSSTNNLSPQSPQTPSHLSADGSGNISPNLSPPIPVNFSYTPAVVTSSTINKDQQKD</sequence>